<proteinExistence type="inferred from homology"/>
<feature type="chain" id="PRO_1000002483" description="Holliday junction branch migration complex subunit RuvA">
    <location>
        <begin position="1"/>
        <end position="206"/>
    </location>
</feature>
<feature type="region of interest" description="Domain I" evidence="1">
    <location>
        <begin position="1"/>
        <end position="64"/>
    </location>
</feature>
<feature type="region of interest" description="Domain II" evidence="1">
    <location>
        <begin position="65"/>
        <end position="144"/>
    </location>
</feature>
<feature type="region of interest" description="Flexible linker" evidence="1">
    <location>
        <begin position="145"/>
        <end position="154"/>
    </location>
</feature>
<feature type="region of interest" description="Domain III" evidence="1">
    <location>
        <begin position="154"/>
        <end position="206"/>
    </location>
</feature>
<evidence type="ECO:0000255" key="1">
    <source>
        <dbReference type="HAMAP-Rule" id="MF_00031"/>
    </source>
</evidence>
<gene>
    <name evidence="1" type="primary">ruvA</name>
    <name type="ordered locus">Meso_3178</name>
</gene>
<dbReference type="EMBL" id="CP000390">
    <property type="protein sequence ID" value="ABG64550.1"/>
    <property type="molecule type" value="Genomic_DNA"/>
</dbReference>
<dbReference type="SMR" id="Q11DH5"/>
<dbReference type="STRING" id="266779.Meso_3178"/>
<dbReference type="KEGG" id="mes:Meso_3178"/>
<dbReference type="eggNOG" id="COG0632">
    <property type="taxonomic scope" value="Bacteria"/>
</dbReference>
<dbReference type="HOGENOM" id="CLU_087936_3_0_5"/>
<dbReference type="OrthoDB" id="5293449at2"/>
<dbReference type="GO" id="GO:0005737">
    <property type="term" value="C:cytoplasm"/>
    <property type="evidence" value="ECO:0007669"/>
    <property type="project" value="UniProtKB-SubCell"/>
</dbReference>
<dbReference type="GO" id="GO:0009379">
    <property type="term" value="C:Holliday junction helicase complex"/>
    <property type="evidence" value="ECO:0007669"/>
    <property type="project" value="InterPro"/>
</dbReference>
<dbReference type="GO" id="GO:0048476">
    <property type="term" value="C:Holliday junction resolvase complex"/>
    <property type="evidence" value="ECO:0007669"/>
    <property type="project" value="UniProtKB-UniRule"/>
</dbReference>
<dbReference type="GO" id="GO:0005524">
    <property type="term" value="F:ATP binding"/>
    <property type="evidence" value="ECO:0007669"/>
    <property type="project" value="InterPro"/>
</dbReference>
<dbReference type="GO" id="GO:0000400">
    <property type="term" value="F:four-way junction DNA binding"/>
    <property type="evidence" value="ECO:0007669"/>
    <property type="project" value="UniProtKB-UniRule"/>
</dbReference>
<dbReference type="GO" id="GO:0009378">
    <property type="term" value="F:four-way junction helicase activity"/>
    <property type="evidence" value="ECO:0007669"/>
    <property type="project" value="InterPro"/>
</dbReference>
<dbReference type="GO" id="GO:0006310">
    <property type="term" value="P:DNA recombination"/>
    <property type="evidence" value="ECO:0007669"/>
    <property type="project" value="UniProtKB-UniRule"/>
</dbReference>
<dbReference type="GO" id="GO:0006281">
    <property type="term" value="P:DNA repair"/>
    <property type="evidence" value="ECO:0007669"/>
    <property type="project" value="UniProtKB-UniRule"/>
</dbReference>
<dbReference type="CDD" id="cd14332">
    <property type="entry name" value="UBA_RuvA_C"/>
    <property type="match status" value="1"/>
</dbReference>
<dbReference type="Gene3D" id="1.10.150.20">
    <property type="entry name" value="5' to 3' exonuclease, C-terminal subdomain"/>
    <property type="match status" value="1"/>
</dbReference>
<dbReference type="Gene3D" id="1.10.8.10">
    <property type="entry name" value="DNA helicase RuvA subunit, C-terminal domain"/>
    <property type="match status" value="1"/>
</dbReference>
<dbReference type="Gene3D" id="2.40.50.140">
    <property type="entry name" value="Nucleic acid-binding proteins"/>
    <property type="match status" value="1"/>
</dbReference>
<dbReference type="HAMAP" id="MF_00031">
    <property type="entry name" value="DNA_HJ_migration_RuvA"/>
    <property type="match status" value="1"/>
</dbReference>
<dbReference type="InterPro" id="IPR013849">
    <property type="entry name" value="DNA_helicase_Holl-junc_RuvA_I"/>
</dbReference>
<dbReference type="InterPro" id="IPR012340">
    <property type="entry name" value="NA-bd_OB-fold"/>
</dbReference>
<dbReference type="InterPro" id="IPR000085">
    <property type="entry name" value="RuvA"/>
</dbReference>
<dbReference type="InterPro" id="IPR010994">
    <property type="entry name" value="RuvA_2-like"/>
</dbReference>
<dbReference type="InterPro" id="IPR011114">
    <property type="entry name" value="RuvA_C"/>
</dbReference>
<dbReference type="InterPro" id="IPR036267">
    <property type="entry name" value="RuvA_C_sf"/>
</dbReference>
<dbReference type="NCBIfam" id="TIGR00084">
    <property type="entry name" value="ruvA"/>
    <property type="match status" value="1"/>
</dbReference>
<dbReference type="Pfam" id="PF14520">
    <property type="entry name" value="HHH_5"/>
    <property type="match status" value="1"/>
</dbReference>
<dbReference type="Pfam" id="PF07499">
    <property type="entry name" value="RuvA_C"/>
    <property type="match status" value="1"/>
</dbReference>
<dbReference type="Pfam" id="PF01330">
    <property type="entry name" value="RuvA_N"/>
    <property type="match status" value="1"/>
</dbReference>
<dbReference type="SUPFAM" id="SSF46929">
    <property type="entry name" value="DNA helicase RuvA subunit, C-terminal domain"/>
    <property type="match status" value="1"/>
</dbReference>
<dbReference type="SUPFAM" id="SSF50249">
    <property type="entry name" value="Nucleic acid-binding proteins"/>
    <property type="match status" value="1"/>
</dbReference>
<dbReference type="SUPFAM" id="SSF47781">
    <property type="entry name" value="RuvA domain 2-like"/>
    <property type="match status" value="1"/>
</dbReference>
<organism>
    <name type="scientific">Chelativorans sp. (strain BNC1)</name>
    <dbReference type="NCBI Taxonomy" id="266779"/>
    <lineage>
        <taxon>Bacteria</taxon>
        <taxon>Pseudomonadati</taxon>
        <taxon>Pseudomonadota</taxon>
        <taxon>Alphaproteobacteria</taxon>
        <taxon>Hyphomicrobiales</taxon>
        <taxon>Phyllobacteriaceae</taxon>
        <taxon>Chelativorans</taxon>
    </lineage>
</organism>
<name>RUVA_CHESB</name>
<keyword id="KW-0963">Cytoplasm</keyword>
<keyword id="KW-0227">DNA damage</keyword>
<keyword id="KW-0233">DNA recombination</keyword>
<keyword id="KW-0234">DNA repair</keyword>
<keyword id="KW-0238">DNA-binding</keyword>
<comment type="function">
    <text evidence="1">The RuvA-RuvB-RuvC complex processes Holliday junction (HJ) DNA during genetic recombination and DNA repair, while the RuvA-RuvB complex plays an important role in the rescue of blocked DNA replication forks via replication fork reversal (RFR). RuvA specifically binds to HJ cruciform DNA, conferring on it an open structure. The RuvB hexamer acts as an ATP-dependent pump, pulling dsDNA into and through the RuvAB complex. HJ branch migration allows RuvC to scan DNA until it finds its consensus sequence, where it cleaves and resolves the cruciform DNA.</text>
</comment>
<comment type="subunit">
    <text evidence="1">Homotetramer. Forms an RuvA(8)-RuvB(12)-Holliday junction (HJ) complex. HJ DNA is sandwiched between 2 RuvA tetramers; dsDNA enters through RuvA and exits via RuvB. An RuvB hexamer assembles on each DNA strand where it exits the tetramer. Each RuvB hexamer is contacted by two RuvA subunits (via domain III) on 2 adjacent RuvB subunits; this complex drives branch migration. In the full resolvosome a probable DNA-RuvA(4)-RuvB(12)-RuvC(2) complex forms which resolves the HJ.</text>
</comment>
<comment type="subcellular location">
    <subcellularLocation>
        <location evidence="1">Cytoplasm</location>
    </subcellularLocation>
</comment>
<comment type="domain">
    <text evidence="1">Has three domains with a flexible linker between the domains II and III and assumes an 'L' shape. Domain III is highly mobile and contacts RuvB.</text>
</comment>
<comment type="similarity">
    <text evidence="1">Belongs to the RuvA family.</text>
</comment>
<sequence>MIGKLKGVLDEIGEDHCVVDVGGVGYVAHCSARSLSTLGSVGTPVTLFIETYVREDMIRLYGFRTVLEREWFRLLQNNVQGVGAKVALSVLSTLTPSELANAIALRDIATVARAPGVGRKVAERIVTELKSKAPAFAGEAAGAIGLKQDLGEGVAPAPVSDAVSALANLGYSRDIAANAVAAALKSAGEGADTGTLIRLGLKELAR</sequence>
<protein>
    <recommendedName>
        <fullName evidence="1">Holliday junction branch migration complex subunit RuvA</fullName>
    </recommendedName>
</protein>
<accession>Q11DH5</accession>
<reference key="1">
    <citation type="submission" date="2006-06" db="EMBL/GenBank/DDBJ databases">
        <title>Complete sequence of chromosome of Mesorhizobium sp. BNC1.</title>
        <authorList>
            <consortium name="US DOE Joint Genome Institute"/>
            <person name="Copeland A."/>
            <person name="Lucas S."/>
            <person name="Lapidus A."/>
            <person name="Barry K."/>
            <person name="Detter J.C."/>
            <person name="Glavina del Rio T."/>
            <person name="Hammon N."/>
            <person name="Israni S."/>
            <person name="Dalin E."/>
            <person name="Tice H."/>
            <person name="Pitluck S."/>
            <person name="Chertkov O."/>
            <person name="Brettin T."/>
            <person name="Bruce D."/>
            <person name="Han C."/>
            <person name="Tapia R."/>
            <person name="Gilna P."/>
            <person name="Schmutz J."/>
            <person name="Larimer F."/>
            <person name="Land M."/>
            <person name="Hauser L."/>
            <person name="Kyrpides N."/>
            <person name="Mikhailova N."/>
            <person name="Richardson P."/>
        </authorList>
    </citation>
    <scope>NUCLEOTIDE SEQUENCE [LARGE SCALE GENOMIC DNA]</scope>
    <source>
        <strain>BNC1</strain>
    </source>
</reference>